<proteinExistence type="evidence at protein level"/>
<accession>P56589</accession>
<accession>Q6FGP5</accession>
<organism>
    <name type="scientific">Homo sapiens</name>
    <name type="common">Human</name>
    <dbReference type="NCBI Taxonomy" id="9606"/>
    <lineage>
        <taxon>Eukaryota</taxon>
        <taxon>Metazoa</taxon>
        <taxon>Chordata</taxon>
        <taxon>Craniata</taxon>
        <taxon>Vertebrata</taxon>
        <taxon>Euteleostomi</taxon>
        <taxon>Mammalia</taxon>
        <taxon>Eutheria</taxon>
        <taxon>Euarchontoglires</taxon>
        <taxon>Primates</taxon>
        <taxon>Haplorrhini</taxon>
        <taxon>Catarrhini</taxon>
        <taxon>Hominidae</taxon>
        <taxon>Homo</taxon>
    </lineage>
</organism>
<comment type="function">
    <text evidence="3 6">Involved in peroxisome biosynthesis and integrity. Assembles membrane vesicles before the matrix proteins are translocated. As a docking factor for PEX19, is necessary for the import of peroxisomal membrane proteins in the peroxisomes.</text>
</comment>
<comment type="subunit">
    <text evidence="2 5 7 8">Interacts with PEX19.</text>
</comment>
<comment type="interaction">
    <interactant intactId="EBI-594885">
        <id>P56589</id>
    </interactant>
    <interactant intactId="EBI-981985">
        <id>Q9Y5Y5</id>
        <label>PEX16</label>
    </interactant>
    <organismsDiffer>false</organismsDiffer>
    <experiments>6</experiments>
</comment>
<comment type="interaction">
    <interactant intactId="EBI-594885">
        <id>P56589</id>
    </interactant>
    <interactant intactId="EBI-594747">
        <id>P40855</id>
        <label>PEX19</label>
    </interactant>
    <organismsDiffer>false</organismsDiffer>
    <experiments>60</experiments>
</comment>
<comment type="subcellular location">
    <subcellularLocation>
        <location evidence="3 5 9">Peroxisome membrane</location>
        <topology evidence="5">Multi-pass membrane protein</topology>
    </subcellularLocation>
</comment>
<comment type="tissue specificity">
    <text>Found in all examined tissues.</text>
</comment>
<comment type="disease" evidence="4">
    <disease id="DI-00921">
        <name>Peroxisome biogenesis disorder complementation group 12</name>
        <acronym>PBD-CG12</acronym>
        <description>A peroxisomal disorder arising from a failure of protein import into the peroxisomal membrane or matrix. The peroxisome biogenesis disorders (PBD group) are genetically heterogeneous with at least 14 distinct genetic groups as concluded from complementation studies. Include disorders are: Zellweger syndrome (ZWS), neonatal adrenoleukodystrophy (NALD), infantile Refsum disease (IRD), and classical rhizomelic chondrodysplasia punctata (RCDP). ZWS, NALD and IRD are distinct from RCDP and constitute a clinical continuum of overlapping phenotypes known as the Zellweger spectrum (PBD-ZSS).</description>
        <dbReference type="MIM" id="614882"/>
    </disease>
    <text>The disease is caused by variants affecting the gene represented in this entry.</text>
</comment>
<comment type="disease" evidence="3 4">
    <disease id="DI-03592">
        <name>Peroxisome biogenesis disorder 10A</name>
        <acronym>PBD10A</acronym>
        <description>A fatal peroxisome biogenesis disorder belonging to the Zellweger disease spectrum and clinically characterized by severe neurologic dysfunction with profound psychomotor retardation, severe hypotonia and neonatal seizures, craniofacial abnormalities, liver dysfunction, and biochemically by the absence of peroxisomes. Additional features include cardiovascular and skeletal defects, renal cysts, ocular abnormalities, and hearing impairment. Most severely affected individuals with the classic form of the disease (classic Zellweger syndrome) die within the first year of life.</description>
        <dbReference type="MIM" id="614882"/>
    </disease>
    <text>The disease is caused by variants affecting the gene represented in this entry.</text>
</comment>
<comment type="disease" evidence="10">
    <disease id="DI-04964">
        <name>Peroxisome biogenesis disorder 10B</name>
        <acronym>PBD10B</acronym>
        <description>A moderately severe peroxisome biogenesis disorder belonging to the Zellweger disease spectrum. PBD10B is characterized by neonatal jaundice, dysmorphic features, delayed psychomotor development, axial hypotonia that can progress to severe spastic paraparesis with hyperreflexia, nephrocalcinosis, neurogenic bladder, nystagmus, and cataracts. Laboratory studies show increased levels of very long-chain fatty acids. Inheritance is autosomal recessive.</description>
        <dbReference type="MIM" id="617370"/>
    </disease>
    <text>The disease is caused by variants affecting the gene represented in this entry.</text>
</comment>
<comment type="similarity">
    <text evidence="11">Belongs to the peroxin-3 family.</text>
</comment>
<protein>
    <recommendedName>
        <fullName>Peroxisomal biogenesis factor 3</fullName>
    </recommendedName>
    <alternativeName>
        <fullName>Peroxin-3</fullName>
    </alternativeName>
    <alternativeName>
        <fullName>Peroxisomal assembly protein PEX3</fullName>
    </alternativeName>
</protein>
<name>PEX3_HUMAN</name>
<gene>
    <name type="primary">PEX3</name>
</gene>
<evidence type="ECO:0000255" key="1"/>
<evidence type="ECO:0000269" key="2">
    <source>
    </source>
</evidence>
<evidence type="ECO:0000269" key="3">
    <source>
    </source>
</evidence>
<evidence type="ECO:0000269" key="4">
    <source>
    </source>
</evidence>
<evidence type="ECO:0000269" key="5">
    <source>
    </source>
</evidence>
<evidence type="ECO:0000269" key="6">
    <source>
    </source>
</evidence>
<evidence type="ECO:0000269" key="7">
    <source>
    </source>
</evidence>
<evidence type="ECO:0000269" key="8">
    <source>
    </source>
</evidence>
<evidence type="ECO:0000269" key="9">
    <source>
    </source>
</evidence>
<evidence type="ECO:0000269" key="10">
    <source>
    </source>
</evidence>
<evidence type="ECO:0000305" key="11"/>
<evidence type="ECO:0007829" key="12">
    <source>
        <dbReference type="PDB" id="3AJB"/>
    </source>
</evidence>
<evidence type="ECO:0007829" key="13">
    <source>
        <dbReference type="PDB" id="3MK4"/>
    </source>
</evidence>
<keyword id="KW-0002">3D-structure</keyword>
<keyword id="KW-0225">Disease variant</keyword>
<keyword id="KW-0472">Membrane</keyword>
<keyword id="KW-0576">Peroxisome</keyword>
<keyword id="KW-0962">Peroxisome biogenesis</keyword>
<keyword id="KW-0958">Peroxisome biogenesis disorder</keyword>
<keyword id="KW-1267">Proteomics identification</keyword>
<keyword id="KW-1185">Reference proteome</keyword>
<keyword id="KW-0812">Transmembrane</keyword>
<keyword id="KW-1133">Transmembrane helix</keyword>
<keyword id="KW-0861">Zellweger syndrome</keyword>
<reference key="1">
    <citation type="journal article" date="1998" name="FEBS Lett.">
        <title>Cloning and characterization of the gene encoding the human peroxisomal assembly protein Pex3p.</title>
        <authorList>
            <person name="Kammerer S."/>
            <person name="Holzinger A."/>
            <person name="Welsch U."/>
            <person name="Roscher A.A."/>
        </authorList>
    </citation>
    <scope>NUCLEOTIDE SEQUENCE [MRNA]</scope>
</reference>
<reference key="2">
    <citation type="journal article" date="1999" name="Eur. J. Cell Biol.">
        <title>Identification and characterization of the human peroxin PEX3.</title>
        <authorList>
            <person name="Soukupova M."/>
            <person name="Sprenger C."/>
            <person name="Gorgas K."/>
            <person name="Kunau W.H."/>
            <person name="Dodt G."/>
        </authorList>
    </citation>
    <scope>NUCLEOTIDE SEQUENCE [MRNA]</scope>
</reference>
<reference key="3">
    <citation type="journal article" date="2000" name="Biochem. Biophys. Res. Commun.">
        <title>The human PEX3 gene encoding a peroxisomal assembly protein: genomic organization, positional mapping, and mutation analysis in candidate phenotypes.</title>
        <authorList>
            <person name="Muntau A.C."/>
            <person name="Holzinger A."/>
            <person name="Mayerhofer P.U."/>
            <person name="Gartner J."/>
            <person name="Roscher A.A."/>
            <person name="Kammerer S."/>
        </authorList>
    </citation>
    <scope>NUCLEOTIDE SEQUENCE [GENOMIC DNA]</scope>
</reference>
<reference key="4">
    <citation type="journal article" date="2000" name="Mol. Biol. Cell">
        <title>The peroxin pex3p initiates membrane assembly in peroxisome biogenesis.</title>
        <authorList>
            <person name="Ghaedi K."/>
            <person name="Tamura S."/>
            <person name="Okumoto K."/>
            <person name="Matsuzono Y."/>
            <person name="Fujiki Y."/>
        </authorList>
    </citation>
    <scope>NUCLEOTIDE SEQUENCE [MRNA]</scope>
    <scope>FUNCTION</scope>
    <scope>SUBCELLULAR LOCATION</scope>
    <scope>VARIANT PBD10A GLU-138</scope>
    <source>
        <tissue>Liver</tissue>
    </source>
</reference>
<reference key="5">
    <citation type="submission" date="2003-04" db="EMBL/GenBank/DDBJ databases">
        <title>Identification of a human transforming gene.</title>
        <authorList>
            <person name="Kim J.W."/>
        </authorList>
    </citation>
    <scope>NUCLEOTIDE SEQUENCE [MRNA]</scope>
</reference>
<reference key="6">
    <citation type="submission" date="2004-06" db="EMBL/GenBank/DDBJ databases">
        <title>Cloning of human full open reading frames in Gateway(TM) system entry vector (pDONR201).</title>
        <authorList>
            <person name="Ebert L."/>
            <person name="Schick M."/>
            <person name="Neubert P."/>
            <person name="Schatten R."/>
            <person name="Henze S."/>
            <person name="Korn B."/>
        </authorList>
    </citation>
    <scope>NUCLEOTIDE SEQUENCE [LARGE SCALE MRNA]</scope>
</reference>
<reference key="7">
    <citation type="journal article" date="2003" name="Nature">
        <title>The DNA sequence and analysis of human chromosome 6.</title>
        <authorList>
            <person name="Mungall A.J."/>
            <person name="Palmer S.A."/>
            <person name="Sims S.K."/>
            <person name="Edwards C.A."/>
            <person name="Ashurst J.L."/>
            <person name="Wilming L."/>
            <person name="Jones M.C."/>
            <person name="Horton R."/>
            <person name="Hunt S.E."/>
            <person name="Scott C.E."/>
            <person name="Gilbert J.G.R."/>
            <person name="Clamp M.E."/>
            <person name="Bethel G."/>
            <person name="Milne S."/>
            <person name="Ainscough R."/>
            <person name="Almeida J.P."/>
            <person name="Ambrose K.D."/>
            <person name="Andrews T.D."/>
            <person name="Ashwell R.I.S."/>
            <person name="Babbage A.K."/>
            <person name="Bagguley C.L."/>
            <person name="Bailey J."/>
            <person name="Banerjee R."/>
            <person name="Barker D.J."/>
            <person name="Barlow K.F."/>
            <person name="Bates K."/>
            <person name="Beare D.M."/>
            <person name="Beasley H."/>
            <person name="Beasley O."/>
            <person name="Bird C.P."/>
            <person name="Blakey S.E."/>
            <person name="Bray-Allen S."/>
            <person name="Brook J."/>
            <person name="Brown A.J."/>
            <person name="Brown J.Y."/>
            <person name="Burford D.C."/>
            <person name="Burrill W."/>
            <person name="Burton J."/>
            <person name="Carder C."/>
            <person name="Carter N.P."/>
            <person name="Chapman J.C."/>
            <person name="Clark S.Y."/>
            <person name="Clark G."/>
            <person name="Clee C.M."/>
            <person name="Clegg S."/>
            <person name="Cobley V."/>
            <person name="Collier R.E."/>
            <person name="Collins J.E."/>
            <person name="Colman L.K."/>
            <person name="Corby N.R."/>
            <person name="Coville G.J."/>
            <person name="Culley K.M."/>
            <person name="Dhami P."/>
            <person name="Davies J."/>
            <person name="Dunn M."/>
            <person name="Earthrowl M.E."/>
            <person name="Ellington A.E."/>
            <person name="Evans K.A."/>
            <person name="Faulkner L."/>
            <person name="Francis M.D."/>
            <person name="Frankish A."/>
            <person name="Frankland J."/>
            <person name="French L."/>
            <person name="Garner P."/>
            <person name="Garnett J."/>
            <person name="Ghori M.J."/>
            <person name="Gilby L.M."/>
            <person name="Gillson C.J."/>
            <person name="Glithero R.J."/>
            <person name="Grafham D.V."/>
            <person name="Grant M."/>
            <person name="Gribble S."/>
            <person name="Griffiths C."/>
            <person name="Griffiths M.N.D."/>
            <person name="Hall R."/>
            <person name="Halls K.S."/>
            <person name="Hammond S."/>
            <person name="Harley J.L."/>
            <person name="Hart E.A."/>
            <person name="Heath P.D."/>
            <person name="Heathcott R."/>
            <person name="Holmes S.J."/>
            <person name="Howden P.J."/>
            <person name="Howe K.L."/>
            <person name="Howell G.R."/>
            <person name="Huckle E."/>
            <person name="Humphray S.J."/>
            <person name="Humphries M.D."/>
            <person name="Hunt A.R."/>
            <person name="Johnson C.M."/>
            <person name="Joy A.A."/>
            <person name="Kay M."/>
            <person name="Keenan S.J."/>
            <person name="Kimberley A.M."/>
            <person name="King A."/>
            <person name="Laird G.K."/>
            <person name="Langford C."/>
            <person name="Lawlor S."/>
            <person name="Leongamornlert D.A."/>
            <person name="Leversha M."/>
            <person name="Lloyd C.R."/>
            <person name="Lloyd D.M."/>
            <person name="Loveland J.E."/>
            <person name="Lovell J."/>
            <person name="Martin S."/>
            <person name="Mashreghi-Mohammadi M."/>
            <person name="Maslen G.L."/>
            <person name="Matthews L."/>
            <person name="McCann O.T."/>
            <person name="McLaren S.J."/>
            <person name="McLay K."/>
            <person name="McMurray A."/>
            <person name="Moore M.J.F."/>
            <person name="Mullikin J.C."/>
            <person name="Niblett D."/>
            <person name="Nickerson T."/>
            <person name="Novik K.L."/>
            <person name="Oliver K."/>
            <person name="Overton-Larty E.K."/>
            <person name="Parker A."/>
            <person name="Patel R."/>
            <person name="Pearce A.V."/>
            <person name="Peck A.I."/>
            <person name="Phillimore B.J.C.T."/>
            <person name="Phillips S."/>
            <person name="Plumb R.W."/>
            <person name="Porter K.M."/>
            <person name="Ramsey Y."/>
            <person name="Ranby S.A."/>
            <person name="Rice C.M."/>
            <person name="Ross M.T."/>
            <person name="Searle S.M."/>
            <person name="Sehra H.K."/>
            <person name="Sheridan E."/>
            <person name="Skuce C.D."/>
            <person name="Smith S."/>
            <person name="Smith M."/>
            <person name="Spraggon L."/>
            <person name="Squares S.L."/>
            <person name="Steward C.A."/>
            <person name="Sycamore N."/>
            <person name="Tamlyn-Hall G."/>
            <person name="Tester J."/>
            <person name="Theaker A.J."/>
            <person name="Thomas D.W."/>
            <person name="Thorpe A."/>
            <person name="Tracey A."/>
            <person name="Tromans A."/>
            <person name="Tubby B."/>
            <person name="Wall M."/>
            <person name="Wallis J.M."/>
            <person name="West A.P."/>
            <person name="White S.S."/>
            <person name="Whitehead S.L."/>
            <person name="Whittaker H."/>
            <person name="Wild A."/>
            <person name="Willey D.J."/>
            <person name="Wilmer T.E."/>
            <person name="Wood J.M."/>
            <person name="Wray P.W."/>
            <person name="Wyatt J.C."/>
            <person name="Young L."/>
            <person name="Younger R.M."/>
            <person name="Bentley D.R."/>
            <person name="Coulson A."/>
            <person name="Durbin R.M."/>
            <person name="Hubbard T."/>
            <person name="Sulston J.E."/>
            <person name="Dunham I."/>
            <person name="Rogers J."/>
            <person name="Beck S."/>
        </authorList>
    </citation>
    <scope>NUCLEOTIDE SEQUENCE [LARGE SCALE GENOMIC DNA]</scope>
</reference>
<reference key="8">
    <citation type="submission" date="2005-09" db="EMBL/GenBank/DDBJ databases">
        <authorList>
            <person name="Mural R.J."/>
            <person name="Istrail S."/>
            <person name="Sutton G."/>
            <person name="Florea L."/>
            <person name="Halpern A.L."/>
            <person name="Mobarry C.M."/>
            <person name="Lippert R."/>
            <person name="Walenz B."/>
            <person name="Shatkay H."/>
            <person name="Dew I."/>
            <person name="Miller J.R."/>
            <person name="Flanigan M.J."/>
            <person name="Edwards N.J."/>
            <person name="Bolanos R."/>
            <person name="Fasulo D."/>
            <person name="Halldorsson B.V."/>
            <person name="Hannenhalli S."/>
            <person name="Turner R."/>
            <person name="Yooseph S."/>
            <person name="Lu F."/>
            <person name="Nusskern D.R."/>
            <person name="Shue B.C."/>
            <person name="Zheng X.H."/>
            <person name="Zhong F."/>
            <person name="Delcher A.L."/>
            <person name="Huson D.H."/>
            <person name="Kravitz S.A."/>
            <person name="Mouchard L."/>
            <person name="Reinert K."/>
            <person name="Remington K.A."/>
            <person name="Clark A.G."/>
            <person name="Waterman M.S."/>
            <person name="Eichler E.E."/>
            <person name="Adams M.D."/>
            <person name="Hunkapiller M.W."/>
            <person name="Myers E.W."/>
            <person name="Venter J.C."/>
        </authorList>
    </citation>
    <scope>NUCLEOTIDE SEQUENCE [LARGE SCALE GENOMIC DNA]</scope>
</reference>
<reference key="9">
    <citation type="journal article" date="2004" name="Genome Res.">
        <title>The status, quality, and expansion of the NIH full-length cDNA project: the Mammalian Gene Collection (MGC).</title>
        <authorList>
            <consortium name="The MGC Project Team"/>
        </authorList>
    </citation>
    <scope>NUCLEOTIDE SEQUENCE [LARGE SCALE MRNA]</scope>
    <source>
        <tissue>Skin</tissue>
        <tissue>Uterus</tissue>
    </source>
</reference>
<reference key="10">
    <citation type="journal article" date="2000" name="J. Cell Biol.">
        <title>PEX19 binds multiple peroxisomal membrane proteins, is predominantly cytoplasmic, and is required for peroxisome membrane synthesis.</title>
        <authorList>
            <person name="Sacksteder K.A."/>
            <person name="Jones J.M."/>
            <person name="South S.T."/>
            <person name="Li X."/>
            <person name="Liu Y."/>
            <person name="Gould S.J."/>
        </authorList>
    </citation>
    <scope>INTERACTION WITH PEX19</scope>
</reference>
<reference key="11">
    <citation type="journal article" date="2001" name="Mol. Cell. Biol.">
        <title>Human pex19p binds peroxisomal integral membrane proteins at regions distinct from their sorting sequences.</title>
        <authorList>
            <person name="Fransen M."/>
            <person name="Wylin T."/>
            <person name="Brees C."/>
            <person name="Mannaerts G.P."/>
            <person name="Van Veldhoven P.P."/>
        </authorList>
    </citation>
    <scope>INTERACTION WITH PEX19</scope>
    <scope>SUBCELLULAR LOCATION</scope>
</reference>
<reference key="12">
    <citation type="journal article" date="2004" name="J. Cell Biol.">
        <title>PEX3 functions as a PEX19 docking factor in the import of class I peroxisomal membrane proteins.</title>
        <authorList>
            <person name="Fang Y."/>
            <person name="Morrell J.C."/>
            <person name="Jones J.M."/>
            <person name="Gould S.J."/>
        </authorList>
    </citation>
    <scope>FUNCTION</scope>
    <scope>MUTAGENESIS OF LEU-125 AND ASN-134</scope>
</reference>
<reference key="13">
    <citation type="journal article" date="2000" name="Am. J. Hum. Genet.">
        <title>Defective peroxisome membrane synthesis due to mutations in human PEX3 causes Zellweger syndrome, complementation group G.</title>
        <authorList>
            <person name="Muntau A.C."/>
            <person name="Mayerhofer P.U."/>
            <person name="Paton B.C."/>
            <person name="Kammerer S."/>
            <person name="Roscher A.A."/>
        </authorList>
    </citation>
    <scope>INVOLVEMENT IN PBD-CG12 AND PBD10A</scope>
</reference>
<reference key="14">
    <citation type="journal article" date="2011" name="BMC Syst. Biol.">
        <title>Initial characterization of the human central proteome.</title>
        <authorList>
            <person name="Burkard T.R."/>
            <person name="Planyavsky M."/>
            <person name="Kaupe I."/>
            <person name="Breitwieser F.P."/>
            <person name="Buerckstuemmer T."/>
            <person name="Bennett K.L."/>
            <person name="Superti-Furga G."/>
            <person name="Colinge J."/>
        </authorList>
    </citation>
    <scope>IDENTIFICATION BY MASS SPECTROMETRY [LARGE SCALE ANALYSIS]</scope>
</reference>
<reference key="15">
    <citation type="journal article" date="2011" name="Proc. Natl. Acad. Sci. U.S.A.">
        <title>Sec16B is involved in the endoplasmic reticulum export of the peroxisomal membrane biogenesis factor peroxin 16 (Pex16) in mammalian cells.</title>
        <authorList>
            <person name="Yonekawa S."/>
            <person name="Furuno A."/>
            <person name="Baba T."/>
            <person name="Fujiki Y."/>
            <person name="Ogasawara Y."/>
            <person name="Yamamoto A."/>
            <person name="Tagaya M."/>
            <person name="Tani K."/>
        </authorList>
    </citation>
    <scope>SUBCELLULAR LOCATION</scope>
</reference>
<reference key="16">
    <citation type="journal article" date="2017" name="JIMD Rep.">
        <title>Novel PEX3 gene mutations resulting in a moderate Zellweger spectrum disorder.</title>
        <authorList>
            <person name="Maxit C."/>
            <person name="Denzler I."/>
            <person name="Marchione D."/>
            <person name="Agosta G."/>
            <person name="Koster J."/>
            <person name="Wanders R.J."/>
            <person name="Ferdinandusse S."/>
            <person name="Waterham H.R."/>
        </authorList>
    </citation>
    <scope>INVOLVEMENT IN PBD10B</scope>
    <scope>VARIANT PBD10B ARG-331</scope>
</reference>
<reference key="17">
    <citation type="journal article" date="2010" name="EMBO J.">
        <title>Structural basis for docking of peroxisomal membrane protein carrier Pex19p onto its receptor Pex3p.</title>
        <authorList>
            <person name="Sato Y."/>
            <person name="Shibata H."/>
            <person name="Nakatsu T."/>
            <person name="Nakano H."/>
            <person name="Kashiwayama Y."/>
            <person name="Imanaka T."/>
            <person name="Kato H."/>
        </authorList>
    </citation>
    <scope>X-RAY CRYSTALLOGRAPHY (2.50 ANGSTROMS) OF 49-373 IN COMPLEX WITH PEX19</scope>
    <scope>SUBUNIT</scope>
</reference>
<reference key="18">
    <citation type="journal article" date="2010" name="J. Biol. Chem.">
        <title>Insights into peroxisome function from the structure of PEX3 in complex with a soluble fragment of PEX19.</title>
        <authorList>
            <person name="Schmidt F."/>
            <person name="Treiber N."/>
            <person name="Zocher G."/>
            <person name="Bjelic S."/>
            <person name="Steinmetz M.O."/>
            <person name="Kalbacher H."/>
            <person name="Stehle T."/>
            <person name="Dodt G."/>
        </authorList>
    </citation>
    <scope>X-RAY CRYSTALLOGRAPHY (2.42 ANGSTROMS) OF 41-373 IN COMPLEX WITH PEX19</scope>
    <scope>SUBUNIT</scope>
</reference>
<feature type="chain" id="PRO_0000208737" description="Peroxisomal biogenesis factor 3">
    <location>
        <begin position="1"/>
        <end position="373"/>
    </location>
</feature>
<feature type="topological domain" description="Cytoplasmic" evidence="1">
    <location>
        <begin position="1"/>
        <end position="15"/>
    </location>
</feature>
<feature type="transmembrane region" description="Helical" evidence="1">
    <location>
        <begin position="16"/>
        <end position="36"/>
    </location>
</feature>
<feature type="topological domain" description="Peroxisomal" evidence="1">
    <location>
        <begin position="37"/>
        <end position="116"/>
    </location>
</feature>
<feature type="transmembrane region" description="Helical" evidence="1">
    <location>
        <begin position="117"/>
        <end position="140"/>
    </location>
</feature>
<feature type="topological domain" description="Cytoplasmic" evidence="1">
    <location>
        <begin position="141"/>
        <end position="373"/>
    </location>
</feature>
<feature type="region of interest" description="Targeting to peroxisomes" evidence="5">
    <location>
        <begin position="1"/>
        <end position="45"/>
    </location>
</feature>
<feature type="region of interest" description="Interaction with PEX19" evidence="5">
    <location>
        <begin position="120"/>
        <end position="136"/>
    </location>
</feature>
<feature type="sequence variant" id="VAR_053572" description="In dbSNP:rs35220041.">
    <original>Q</original>
    <variation>R</variation>
    <location>
        <position position="82"/>
    </location>
</feature>
<feature type="sequence variant" id="VAR_009304" description="In PBD10A." evidence="3">
    <original>G</original>
    <variation>E</variation>
    <location>
        <position position="138"/>
    </location>
</feature>
<feature type="sequence variant" id="VAR_078657" description="In PBD10B; dbSNP:rs1057523689." evidence="10">
    <original>G</original>
    <variation>R</variation>
    <location>
        <position position="331"/>
    </location>
</feature>
<feature type="mutagenesis site" description="Abolishes binding to PEX19 without affecting targeting to peroxisomes; when associated with D-134." evidence="6">
    <original>L</original>
    <variation>P</variation>
    <location>
        <position position="125"/>
    </location>
</feature>
<feature type="mutagenesis site" description="Abolishes binding to PEX19 without affecting targeting to peroxisomes; when associated with P-125." evidence="6">
    <original>N</original>
    <variation>D</variation>
    <location>
        <position position="134"/>
    </location>
</feature>
<feature type="helix" evidence="13">
    <location>
        <begin position="41"/>
        <end position="83"/>
    </location>
</feature>
<feature type="helix" evidence="13">
    <location>
        <begin position="86"/>
        <end position="93"/>
    </location>
</feature>
<feature type="helix" evidence="13">
    <location>
        <begin position="100"/>
        <end position="142"/>
    </location>
</feature>
<feature type="strand" evidence="12">
    <location>
        <begin position="147"/>
        <end position="151"/>
    </location>
</feature>
<feature type="helix" evidence="13">
    <location>
        <begin position="158"/>
        <end position="165"/>
    </location>
</feature>
<feature type="helix" evidence="13">
    <location>
        <begin position="166"/>
        <end position="168"/>
    </location>
</feature>
<feature type="helix" evidence="13">
    <location>
        <begin position="169"/>
        <end position="172"/>
    </location>
</feature>
<feature type="helix" evidence="13">
    <location>
        <begin position="174"/>
        <end position="191"/>
    </location>
</feature>
<feature type="strand" evidence="13">
    <location>
        <begin position="199"/>
        <end position="201"/>
    </location>
</feature>
<feature type="helix" evidence="13">
    <location>
        <begin position="202"/>
        <end position="217"/>
    </location>
</feature>
<feature type="helix" evidence="13">
    <location>
        <begin position="234"/>
        <end position="237"/>
    </location>
</feature>
<feature type="helix" evidence="12">
    <location>
        <begin position="246"/>
        <end position="248"/>
    </location>
</feature>
<feature type="helix" evidence="13">
    <location>
        <begin position="255"/>
        <end position="271"/>
    </location>
</feature>
<feature type="helix" evidence="13">
    <location>
        <begin position="274"/>
        <end position="296"/>
    </location>
</feature>
<feature type="strand" evidence="13">
    <location>
        <begin position="319"/>
        <end position="321"/>
    </location>
</feature>
<feature type="helix" evidence="13">
    <location>
        <begin position="322"/>
        <end position="330"/>
    </location>
</feature>
<feature type="helix" evidence="13">
    <location>
        <begin position="333"/>
        <end position="336"/>
    </location>
</feature>
<feature type="turn" evidence="12">
    <location>
        <begin position="339"/>
        <end position="341"/>
    </location>
</feature>
<feature type="helix" evidence="13">
    <location>
        <begin position="344"/>
        <end position="349"/>
    </location>
</feature>
<feature type="helix" evidence="13">
    <location>
        <begin position="352"/>
        <end position="366"/>
    </location>
</feature>
<dbReference type="EMBL" id="AJ001625">
    <property type="protein sequence ID" value="CAA04879.1"/>
    <property type="molecule type" value="mRNA"/>
</dbReference>
<dbReference type="EMBL" id="AJ131389">
    <property type="protein sequence ID" value="CAA10362.1"/>
    <property type="molecule type" value="mRNA"/>
</dbReference>
<dbReference type="EMBL" id="AJ009866">
    <property type="protein sequence ID" value="CAA08904.1"/>
    <property type="molecule type" value="Genomic_DNA"/>
</dbReference>
<dbReference type="EMBL" id="AJ009867">
    <property type="protein sequence ID" value="CAA08904.1"/>
    <property type="status" value="JOINED"/>
    <property type="molecule type" value="Genomic_DNA"/>
</dbReference>
<dbReference type="EMBL" id="AJ009868">
    <property type="protein sequence ID" value="CAA08904.1"/>
    <property type="status" value="JOINED"/>
    <property type="molecule type" value="Genomic_DNA"/>
</dbReference>
<dbReference type="EMBL" id="AJ009869">
    <property type="protein sequence ID" value="CAA08904.1"/>
    <property type="status" value="JOINED"/>
    <property type="molecule type" value="Genomic_DNA"/>
</dbReference>
<dbReference type="EMBL" id="AJ009870">
    <property type="protein sequence ID" value="CAA08904.1"/>
    <property type="status" value="JOINED"/>
    <property type="molecule type" value="Genomic_DNA"/>
</dbReference>
<dbReference type="EMBL" id="AJ009871">
    <property type="protein sequence ID" value="CAA08904.1"/>
    <property type="status" value="JOINED"/>
    <property type="molecule type" value="Genomic_DNA"/>
</dbReference>
<dbReference type="EMBL" id="AJ009872">
    <property type="protein sequence ID" value="CAA08904.1"/>
    <property type="status" value="JOINED"/>
    <property type="molecule type" value="Genomic_DNA"/>
</dbReference>
<dbReference type="EMBL" id="AJ009873">
    <property type="protein sequence ID" value="CAA08904.1"/>
    <property type="status" value="JOINED"/>
    <property type="molecule type" value="Genomic_DNA"/>
</dbReference>
<dbReference type="EMBL" id="AJ009874">
    <property type="protein sequence ID" value="CAA08904.1"/>
    <property type="status" value="JOINED"/>
    <property type="molecule type" value="Genomic_DNA"/>
</dbReference>
<dbReference type="EMBL" id="AB035307">
    <property type="protein sequence ID" value="BAA97993.1"/>
    <property type="molecule type" value="mRNA"/>
</dbReference>
<dbReference type="EMBL" id="AY277600">
    <property type="protein sequence ID" value="AAQ18039.1"/>
    <property type="molecule type" value="mRNA"/>
</dbReference>
<dbReference type="EMBL" id="CR542062">
    <property type="protein sequence ID" value="CAG46859.1"/>
    <property type="molecule type" value="mRNA"/>
</dbReference>
<dbReference type="EMBL" id="AL031320">
    <property type="status" value="NOT_ANNOTATED_CDS"/>
    <property type="molecule type" value="Genomic_DNA"/>
</dbReference>
<dbReference type="EMBL" id="CH471051">
    <property type="protein sequence ID" value="EAW47866.1"/>
    <property type="molecule type" value="Genomic_DNA"/>
</dbReference>
<dbReference type="EMBL" id="BC014551">
    <property type="protein sequence ID" value="AAH14551.1"/>
    <property type="molecule type" value="mRNA"/>
</dbReference>
<dbReference type="EMBL" id="BC015506">
    <property type="protein sequence ID" value="AAH15506.1"/>
    <property type="molecule type" value="mRNA"/>
</dbReference>
<dbReference type="CCDS" id="CCDS5199.1"/>
<dbReference type="RefSeq" id="NP_003621.1">
    <property type="nucleotide sequence ID" value="NM_003630.3"/>
</dbReference>
<dbReference type="PDB" id="3AJB">
    <property type="method" value="X-ray"/>
    <property type="resolution" value="2.50 A"/>
    <property type="chains" value="A=49-373"/>
</dbReference>
<dbReference type="PDB" id="3MK4">
    <property type="method" value="X-ray"/>
    <property type="resolution" value="2.42 A"/>
    <property type="chains" value="A=41-373"/>
</dbReference>
<dbReference type="PDBsum" id="3AJB"/>
<dbReference type="PDBsum" id="3MK4"/>
<dbReference type="SMR" id="P56589"/>
<dbReference type="BioGRID" id="114076">
    <property type="interactions" value="204"/>
</dbReference>
<dbReference type="CORUM" id="P56589"/>
<dbReference type="ELM" id="P56589"/>
<dbReference type="FunCoup" id="P56589">
    <property type="interactions" value="2180"/>
</dbReference>
<dbReference type="IntAct" id="P56589">
    <property type="interactions" value="41"/>
</dbReference>
<dbReference type="MINT" id="P56589"/>
<dbReference type="STRING" id="9606.ENSP00000356563"/>
<dbReference type="TCDB" id="9.A.17.1.2">
    <property type="family name" value="the integral membrane peroxisomal protein importer-2 (ppi2) family"/>
</dbReference>
<dbReference type="GlyGen" id="P56589">
    <property type="glycosylation" value="3 sites, 2 N-linked glycans (2 sites), 1 O-linked glycan (1 site)"/>
</dbReference>
<dbReference type="iPTMnet" id="P56589"/>
<dbReference type="PhosphoSitePlus" id="P56589"/>
<dbReference type="SwissPalm" id="P56589"/>
<dbReference type="BioMuta" id="PEX3"/>
<dbReference type="DMDM" id="3914303"/>
<dbReference type="jPOST" id="P56589"/>
<dbReference type="MassIVE" id="P56589"/>
<dbReference type="PaxDb" id="9606-ENSP00000356563"/>
<dbReference type="PeptideAtlas" id="P56589"/>
<dbReference type="ProteomicsDB" id="56929"/>
<dbReference type="Pumba" id="P56589"/>
<dbReference type="Antibodypedia" id="33142">
    <property type="antibodies" value="133 antibodies from 25 providers"/>
</dbReference>
<dbReference type="DNASU" id="8504"/>
<dbReference type="Ensembl" id="ENST00000367591.5">
    <property type="protein sequence ID" value="ENSP00000356563.4"/>
    <property type="gene ID" value="ENSG00000034693.15"/>
</dbReference>
<dbReference type="GeneID" id="8504"/>
<dbReference type="KEGG" id="hsa:8504"/>
<dbReference type="MANE-Select" id="ENST00000367591.5">
    <property type="protein sequence ID" value="ENSP00000356563.4"/>
    <property type="RefSeq nucleotide sequence ID" value="NM_003630.3"/>
    <property type="RefSeq protein sequence ID" value="NP_003621.1"/>
</dbReference>
<dbReference type="UCSC" id="uc003qjl.4">
    <property type="organism name" value="human"/>
</dbReference>
<dbReference type="AGR" id="HGNC:8858"/>
<dbReference type="CTD" id="8504"/>
<dbReference type="DisGeNET" id="8504"/>
<dbReference type="GeneCards" id="PEX3"/>
<dbReference type="GeneReviews" id="PEX3"/>
<dbReference type="HGNC" id="HGNC:8858">
    <property type="gene designation" value="PEX3"/>
</dbReference>
<dbReference type="HPA" id="ENSG00000034693">
    <property type="expression patterns" value="Low tissue specificity"/>
</dbReference>
<dbReference type="MalaCards" id="PEX3"/>
<dbReference type="MIM" id="603164">
    <property type="type" value="gene"/>
</dbReference>
<dbReference type="MIM" id="614882">
    <property type="type" value="phenotype"/>
</dbReference>
<dbReference type="MIM" id="617370">
    <property type="type" value="phenotype"/>
</dbReference>
<dbReference type="neXtProt" id="NX_P56589"/>
<dbReference type="OpenTargets" id="ENSG00000034693"/>
<dbReference type="Orphanet" id="772">
    <property type="disease" value="Infantile Refsum disease"/>
</dbReference>
<dbReference type="Orphanet" id="44">
    <property type="disease" value="Neonatal adrenoleukodystrophy"/>
</dbReference>
<dbReference type="Orphanet" id="912">
    <property type="disease" value="Zellweger syndrome"/>
</dbReference>
<dbReference type="PharmGKB" id="PA33200"/>
<dbReference type="VEuPathDB" id="HostDB:ENSG00000034693"/>
<dbReference type="eggNOG" id="KOG4444">
    <property type="taxonomic scope" value="Eukaryota"/>
</dbReference>
<dbReference type="GeneTree" id="ENSGT00390000008481"/>
<dbReference type="HOGENOM" id="CLU_041367_2_0_1"/>
<dbReference type="InParanoid" id="P56589"/>
<dbReference type="OMA" id="HRGWKDL"/>
<dbReference type="OrthoDB" id="45930at2759"/>
<dbReference type="PAN-GO" id="P56589">
    <property type="GO annotations" value="3 GO annotations based on evolutionary models"/>
</dbReference>
<dbReference type="PhylomeDB" id="P56589"/>
<dbReference type="TreeFam" id="TF352826"/>
<dbReference type="PathwayCommons" id="P56589"/>
<dbReference type="Reactome" id="R-HSA-1369062">
    <property type="pathway name" value="ABC transporters in lipid homeostasis"/>
</dbReference>
<dbReference type="Reactome" id="R-HSA-9603798">
    <property type="pathway name" value="Class I peroxisomal membrane protein import"/>
</dbReference>
<dbReference type="SignaLink" id="P56589"/>
<dbReference type="SIGNOR" id="P56589"/>
<dbReference type="BioGRID-ORCS" id="8504">
    <property type="hits" value="41 hits in 1162 CRISPR screens"/>
</dbReference>
<dbReference type="EvolutionaryTrace" id="P56589"/>
<dbReference type="GeneWiki" id="PEX3"/>
<dbReference type="GenomeRNAi" id="8504"/>
<dbReference type="Pharos" id="P56589">
    <property type="development level" value="Tbio"/>
</dbReference>
<dbReference type="PRO" id="PR:P56589"/>
<dbReference type="Proteomes" id="UP000005640">
    <property type="component" value="Chromosome 6"/>
</dbReference>
<dbReference type="RNAct" id="P56589">
    <property type="molecule type" value="protein"/>
</dbReference>
<dbReference type="Bgee" id="ENSG00000034693">
    <property type="expression patterns" value="Expressed in adrenal tissue and 208 other cell types or tissues"/>
</dbReference>
<dbReference type="ExpressionAtlas" id="P56589">
    <property type="expression patterns" value="baseline and differential"/>
</dbReference>
<dbReference type="GO" id="GO:0005783">
    <property type="term" value="C:endoplasmic reticulum"/>
    <property type="evidence" value="ECO:0000314"/>
    <property type="project" value="UniProtKB"/>
</dbReference>
<dbReference type="GO" id="GO:0016020">
    <property type="term" value="C:membrane"/>
    <property type="evidence" value="ECO:0007005"/>
    <property type="project" value="UniProtKB"/>
</dbReference>
<dbReference type="GO" id="GO:0005654">
    <property type="term" value="C:nucleoplasm"/>
    <property type="evidence" value="ECO:0000314"/>
    <property type="project" value="HPA"/>
</dbReference>
<dbReference type="GO" id="GO:0005778">
    <property type="term" value="C:peroxisomal membrane"/>
    <property type="evidence" value="ECO:0000314"/>
    <property type="project" value="UniProtKB"/>
</dbReference>
<dbReference type="GO" id="GO:0005777">
    <property type="term" value="C:peroxisome"/>
    <property type="evidence" value="ECO:0000314"/>
    <property type="project" value="MGI"/>
</dbReference>
<dbReference type="GO" id="GO:0032991">
    <property type="term" value="C:protein-containing complex"/>
    <property type="evidence" value="ECO:0000314"/>
    <property type="project" value="UniProtKB"/>
</dbReference>
<dbReference type="GO" id="GO:0032994">
    <property type="term" value="C:protein-lipid complex"/>
    <property type="evidence" value="ECO:0000314"/>
    <property type="project" value="UniProtKB"/>
</dbReference>
<dbReference type="GO" id="GO:0008289">
    <property type="term" value="F:lipid binding"/>
    <property type="evidence" value="ECO:0000314"/>
    <property type="project" value="UniProtKB"/>
</dbReference>
<dbReference type="GO" id="GO:0030674">
    <property type="term" value="F:protein-macromolecule adaptor activity"/>
    <property type="evidence" value="ECO:0000318"/>
    <property type="project" value="GO_Central"/>
</dbReference>
<dbReference type="GO" id="GO:0007031">
    <property type="term" value="P:peroxisome organization"/>
    <property type="evidence" value="ECO:0000315"/>
    <property type="project" value="UniProtKB"/>
</dbReference>
<dbReference type="GO" id="GO:0045046">
    <property type="term" value="P:protein import into peroxisome membrane"/>
    <property type="evidence" value="ECO:0000315"/>
    <property type="project" value="UniProtKB"/>
</dbReference>
<dbReference type="InterPro" id="IPR006966">
    <property type="entry name" value="Peroxin-3"/>
</dbReference>
<dbReference type="PANTHER" id="PTHR28080">
    <property type="entry name" value="PEROXISOMAL BIOGENESIS FACTOR 3"/>
    <property type="match status" value="1"/>
</dbReference>
<dbReference type="PANTHER" id="PTHR28080:SF1">
    <property type="entry name" value="PEROXISOMAL BIOGENESIS FACTOR 3"/>
    <property type="match status" value="1"/>
</dbReference>
<dbReference type="Pfam" id="PF04882">
    <property type="entry name" value="Peroxin-3"/>
    <property type="match status" value="2"/>
</dbReference>
<sequence length="373" mass="42140">MLRSVWNFLKRHKKKCIFLGTVLGGVYILGKYGQKKIREIQEREAAEYIAQARRQYHFESNQRTCNMTVLSMLPTLREALMQQLNSESLTALLKNRPSNKLEIWEDLKIISFTRSTVAVYSTCMLVVLLRVQLNIIGGYIYLDNAAVGKNGTTILAPPDVQQQYLSSIQHLLGDGLTELITVIKQAVQKVLGSVSLKHSLSLLDLEQKLKEIRNLVEQHKSSSWINKDGSKPLLCHYMMPDEETPLAVQACGLSPRDITTIKLLNETRDMLESPDFSTVLNTCLNRGFSRLLDNMAEFFRPTEQDLQHGNSMNSLSSVSLPLAKIIPIVNGQIHSVCSETPSHFVQDLLTMEQVKDFAANVYEAFSTPQQLEK</sequence>